<organism>
    <name type="scientific">Theropithecus gelada</name>
    <name type="common">Gelada baboon</name>
    <dbReference type="NCBI Taxonomy" id="9565"/>
    <lineage>
        <taxon>Eukaryota</taxon>
        <taxon>Metazoa</taxon>
        <taxon>Chordata</taxon>
        <taxon>Craniata</taxon>
        <taxon>Vertebrata</taxon>
        <taxon>Euteleostomi</taxon>
        <taxon>Mammalia</taxon>
        <taxon>Eutheria</taxon>
        <taxon>Euarchontoglires</taxon>
        <taxon>Primates</taxon>
        <taxon>Haplorrhini</taxon>
        <taxon>Catarrhini</taxon>
        <taxon>Cercopithecidae</taxon>
        <taxon>Cercopithecinae</taxon>
        <taxon>Theropithecus</taxon>
    </lineage>
</organism>
<evidence type="ECO:0000250" key="1">
    <source>
        <dbReference type="UniProtKB" id="P08067"/>
    </source>
</evidence>
<evidence type="ECO:0000250" key="2">
    <source>
        <dbReference type="UniProtKB" id="P13272"/>
    </source>
</evidence>
<evidence type="ECO:0000250" key="3">
    <source>
        <dbReference type="UniProtKB" id="P47985"/>
    </source>
</evidence>
<evidence type="ECO:0000250" key="4">
    <source>
        <dbReference type="UniProtKB" id="Q5ZLR5"/>
    </source>
</evidence>
<evidence type="ECO:0000250" key="5">
    <source>
        <dbReference type="UniProtKB" id="Q9CR68"/>
    </source>
</evidence>
<evidence type="ECO:0000255" key="6">
    <source>
        <dbReference type="PROSITE-ProRule" id="PRU00628"/>
    </source>
</evidence>
<evidence type="ECO:0000305" key="7"/>
<proteinExistence type="inferred from homology"/>
<feature type="chain" id="PRO_0000307250" description="Cytochrome b-c1 complex subunit 9" evidence="5">
    <location>
        <begin position="1"/>
        <end position="78"/>
    </location>
</feature>
<feature type="chain" id="PRO_0000030673" description="Cytochrome b-c1 complex subunit Rieske, mitochondrial">
    <location>
        <begin position="79"/>
        <end position="274"/>
    </location>
</feature>
<feature type="topological domain" description="Mitochondrial matrix" evidence="2">
    <location>
        <begin position="79"/>
        <end position="103"/>
    </location>
</feature>
<feature type="transmembrane region" description="Helical" evidence="2">
    <location>
        <begin position="104"/>
        <end position="140"/>
    </location>
</feature>
<feature type="topological domain" description="Mitochondrial intermembrane" evidence="2">
    <location>
        <begin position="141"/>
        <end position="274"/>
    </location>
</feature>
<feature type="domain" description="Rieske" evidence="6">
    <location>
        <begin position="187"/>
        <end position="272"/>
    </location>
</feature>
<feature type="binding site" evidence="2">
    <location>
        <position position="217"/>
    </location>
    <ligand>
        <name>[2Fe-2S] cluster</name>
        <dbReference type="ChEBI" id="CHEBI:190135"/>
    </ligand>
</feature>
<feature type="binding site" evidence="2">
    <location>
        <position position="219"/>
    </location>
    <ligand>
        <name>[2Fe-2S] cluster</name>
        <dbReference type="ChEBI" id="CHEBI:190135"/>
    </ligand>
</feature>
<feature type="binding site" evidence="2">
    <location>
        <position position="236"/>
    </location>
    <ligand>
        <name>[2Fe-2S] cluster</name>
        <dbReference type="ChEBI" id="CHEBI:190135"/>
    </ligand>
</feature>
<feature type="binding site" evidence="2">
    <location>
        <position position="239"/>
    </location>
    <ligand>
        <name>[2Fe-2S] cluster</name>
        <dbReference type="ChEBI" id="CHEBI:190135"/>
    </ligand>
</feature>
<feature type="binding site" evidence="2">
    <location>
        <position position="241"/>
    </location>
    <ligand>
        <name>[2Fe-2S] cluster</name>
        <dbReference type="ChEBI" id="CHEBI:190135"/>
    </ligand>
</feature>
<feature type="disulfide bond" evidence="2">
    <location>
        <begin position="222"/>
        <end position="238"/>
    </location>
</feature>
<reference key="1">
    <citation type="submission" date="2003-08" db="EMBL/GenBank/DDBJ databases">
        <title>Molecular evolution of the iron sulfur protein and subunit 9 of complex III of the electron transport chain in primates.</title>
        <authorList>
            <person name="Doan J.W."/>
            <person name="Wildman D.E."/>
            <person name="Schmidt T.R."/>
            <person name="Weiss M.L."/>
            <person name="Goodman M."/>
            <person name="Grossman L.I."/>
        </authorList>
    </citation>
    <scope>NUCLEOTIDE SEQUENCE [GENOMIC DNA]</scope>
</reference>
<comment type="function">
    <molecule>Cytochrome b-c1 complex subunit Rieske, mitochondrial</molecule>
    <text evidence="1 3">Component of the ubiquinol-cytochrome c oxidoreductase, a multisubunit transmembrane complex that is part of the mitochondrial electron transport chain which drives oxidative phosphorylation. The respiratory chain contains 3 multisubunit complexes succinate dehydrogenase (complex II, CII), ubiquinol-cytochrome c oxidoreductase (cytochrome b-c1 complex, complex III, CIII) and cytochrome c oxidase (complex IV, CIV), that cooperate to transfer electrons derived from NADH and succinate to molecular oxygen, creating an electrochemical gradient over the inner membrane that drives transmembrane transport and the ATP synthase. The cytochrome b-c1 complex catalyzes electron transfer from ubiquinol to cytochrome c, linking this redox reaction to translocation of protons across the mitochondrial inner membrane, with protons being carried across the membrane as hydrogens on the quinol. In the process called Q cycle, 2 protons are consumed from the matrix, 4 protons are released into the intermembrane space and 2 electrons are passed to cytochrome c. The Rieske protein is a catalytic core subunit containing a [2Fe-2S] iron-sulfur cluster. It cycles between 2 conformational states during catalysis to transfer electrons from the quinol bound in the Q(0) site in cytochrome b to cytochrome c1 (By similarity). Incorporation of UQCRFS1 is the penultimate step in complex III assembly (By similarity).</text>
</comment>
<comment type="function">
    <molecule>Cytochrome b-c1 complex subunit 9</molecule>
    <text evidence="2 3 5">Component of the ubiquinol-cytochrome c oxidoreductase (cytochrome b-c1 complex, complex III, CIII). UQCRFS1 undergoes proteolytic processing once it is incorporated in the complex III dimer. One of the fragments, called subunit 9, corresponds to its mitochondrial targeting sequence (MTS) (By similarity). The proteolytic processing is necessary for the correct insertion of UQCRFS1 in the complex III dimer, but the persistence of UQCRFS1-derived fragments may prevent newly imported UQCRFS1 to be processed and assembled into complex III and is detrimental for the complex III structure and function (By similarity).</text>
</comment>
<comment type="catalytic activity">
    <reaction evidence="1">
        <text>a quinol + 2 Fe(III)-[cytochrome c](out) = a quinone + 2 Fe(II)-[cytochrome c](out) + 2 H(+)(out)</text>
        <dbReference type="Rhea" id="RHEA:11484"/>
        <dbReference type="Rhea" id="RHEA-COMP:10350"/>
        <dbReference type="Rhea" id="RHEA-COMP:14399"/>
        <dbReference type="ChEBI" id="CHEBI:15378"/>
        <dbReference type="ChEBI" id="CHEBI:24646"/>
        <dbReference type="ChEBI" id="CHEBI:29033"/>
        <dbReference type="ChEBI" id="CHEBI:29034"/>
        <dbReference type="ChEBI" id="CHEBI:132124"/>
        <dbReference type="EC" id="7.1.1.8"/>
    </reaction>
</comment>
<comment type="cofactor">
    <cofactor evidence="6">
        <name>[2Fe-2S] cluster</name>
        <dbReference type="ChEBI" id="CHEBI:190135"/>
    </cofactor>
    <text evidence="3 6">Binds 1 [2Fe-2S] cluster per subunit. Fe-S cluster delivery to the Rieske protein is mediated by components of the iron sulfur (Fe-S) cluster assembly machinery that reside in the mitochondrial matrix (including HSC20 and LYRM7) (By similarity).</text>
</comment>
<comment type="subunit">
    <molecule>Cytochrome b-c1 complex subunit Rieske, mitochondrial</molecule>
    <text evidence="2 3">Component of the ubiquinol-cytochrome c oxidoreductase (cytochrome b-c1 complex, complex III, CIII), a multisubunit enzyme composed of 11 subunits. The complex is composed of 3 respiratory subunits cytochrome b, cytochrome c1 and Rieske protein UQCRFS1, 2 core protein subunits UQCRC1/QCR1 and UQCRC2/QCR2, and 6 low-molecular weight protein subunits UQCRH/QCR6, UQCRB/QCR7, UQCRQ/QCR8, UQCR10/QCR9, UQCR11/QCR10 and subunit 9, the cleavage product of Rieske protein UQCRFS1. The complex exists as an obligatory dimer and forms supercomplexes (SCs) in the inner mitochondrial membrane with NADH-ubiquinone oxidoreductase (complex I, CI) and cytochrome c oxidase (complex IV, CIV), resulting in different assemblies (supercomplex SCI(1)III(2)IV(1) and megacomplex MCI(2)III(2)IV(2)) (By similarity). Incorporation of the Rieske protein UQCRFS1 is the penultimate step in complex III assembly. Interacts with TTC19, which is involved in the clearance of UQCRFS1 fragments (By similarity).</text>
</comment>
<comment type="subunit">
    <molecule>Cytochrome b-c1 complex subunit 9</molecule>
    <text evidence="2">Component of the ubiquinol-cytochrome c oxidoreductase (cytochrome b-c1 complex, complex III, CIII). Subunit 9 corresponds to the mitochondrial targeting sequence (MTS) of Rieske protein UQCRFS1. It is retained after processing and incorporated inside complex III, where it remains bound to the complex and localizes between the 2 core subunits UQCRC1/QCR1 and UQCRC2/QCR2.</text>
</comment>
<comment type="subcellular location">
    <subcellularLocation>
        <location evidence="4">Mitochondrion inner membrane</location>
        <topology evidence="4">Single-pass membrane protein</topology>
    </subcellularLocation>
</comment>
<comment type="PTM">
    <text evidence="5">Proteolytic processing is necessary for the correct insertion of UQCRFS1 in the complex III dimer. Several fragments are generated during UQCRFS1 insertion, most probably due to the endogenous matrix-processing peptidase (MPP) activity of the 2 core protein subunits UQCRC1/QCR1 and UQCRC2/QCR2, which are homologous to the 2 mitochondrial-processing peptidase (MPP) subunits beta-MPP and alpha-MPP respectively. The action of the protease is also necessary for the clearance of the UQCRFS1 fragments.</text>
</comment>
<comment type="miscellaneous">
    <text>The Rieske protein is a high potential 2Fe-2S protein.</text>
</comment>
<comment type="similarity">
    <text evidence="7">Belongs to the Rieske iron-sulfur protein family.</text>
</comment>
<comment type="caution">
    <text evidence="2 3">Several peptides are generated during UQCRFS1 insertion. According to some authors, the identification of the transit peptide as the subunit 9, does not necessary imply that it must be considered as a structural subunit of the complex III dimer as additional fragments from UQCRFS1 are also present.</text>
</comment>
<accession>Q69BK2</accession>
<keyword id="KW-0001">2Fe-2S</keyword>
<keyword id="KW-1015">Disulfide bond</keyword>
<keyword id="KW-0249">Electron transport</keyword>
<keyword id="KW-0408">Iron</keyword>
<keyword id="KW-0411">Iron-sulfur</keyword>
<keyword id="KW-0472">Membrane</keyword>
<keyword id="KW-0479">Metal-binding</keyword>
<keyword id="KW-0496">Mitochondrion</keyword>
<keyword id="KW-0999">Mitochondrion inner membrane</keyword>
<keyword id="KW-1185">Reference proteome</keyword>
<keyword id="KW-0679">Respiratory chain</keyword>
<keyword id="KW-0809">Transit peptide</keyword>
<keyword id="KW-1278">Translocase</keyword>
<keyword id="KW-0812">Transmembrane</keyword>
<keyword id="KW-1133">Transmembrane helix</keyword>
<keyword id="KW-0813">Transport</keyword>
<gene>
    <name type="primary">UQCRFS1</name>
</gene>
<dbReference type="EC" id="7.1.1.8"/>
<dbReference type="EMBL" id="AY387504">
    <property type="protein sequence ID" value="AAR32734.1"/>
    <property type="molecule type" value="Genomic_DNA"/>
</dbReference>
<dbReference type="EMBL" id="AY387503">
    <property type="protein sequence ID" value="AAR32734.1"/>
    <property type="status" value="JOINED"/>
    <property type="molecule type" value="Genomic_DNA"/>
</dbReference>
<dbReference type="SMR" id="Q69BK2"/>
<dbReference type="Ensembl" id="ENSTGET00000023898.1">
    <property type="protein sequence ID" value="ENSTGEP00000020076.1"/>
    <property type="gene ID" value="ENSTGEG00000016148.1"/>
</dbReference>
<dbReference type="Proteomes" id="UP000694411">
    <property type="component" value="Chromosome 19"/>
</dbReference>
<dbReference type="GO" id="GO:0005743">
    <property type="term" value="C:mitochondrial inner membrane"/>
    <property type="evidence" value="ECO:0007669"/>
    <property type="project" value="UniProtKB-SubCell"/>
</dbReference>
<dbReference type="GO" id="GO:0005739">
    <property type="term" value="C:mitochondrion"/>
    <property type="evidence" value="ECO:0000250"/>
    <property type="project" value="UniProtKB"/>
</dbReference>
<dbReference type="GO" id="GO:0051537">
    <property type="term" value="F:2 iron, 2 sulfur cluster binding"/>
    <property type="evidence" value="ECO:0007669"/>
    <property type="project" value="UniProtKB-KW"/>
</dbReference>
<dbReference type="GO" id="GO:0046872">
    <property type="term" value="F:metal ion binding"/>
    <property type="evidence" value="ECO:0007669"/>
    <property type="project" value="UniProtKB-KW"/>
</dbReference>
<dbReference type="GO" id="GO:0008121">
    <property type="term" value="F:ubiquinol-cytochrome-c reductase activity"/>
    <property type="evidence" value="ECO:0007669"/>
    <property type="project" value="UniProtKB-EC"/>
</dbReference>
<dbReference type="GO" id="GO:0022904">
    <property type="term" value="P:respiratory electron transport chain"/>
    <property type="evidence" value="ECO:0000250"/>
    <property type="project" value="UniProtKB"/>
</dbReference>
<dbReference type="CDD" id="cd03470">
    <property type="entry name" value="Rieske_cytochrome_bc1"/>
    <property type="match status" value="1"/>
</dbReference>
<dbReference type="FunFam" id="1.20.5.270:FF:000001">
    <property type="entry name" value="Cytochrome b-c1 complex subunit Rieske, mitochondrial"/>
    <property type="match status" value="1"/>
</dbReference>
<dbReference type="FunFam" id="2.10.210.10:FF:000001">
    <property type="entry name" value="Cytochrome b-c1 complex subunit Rieske, mitochondrial"/>
    <property type="match status" value="1"/>
</dbReference>
<dbReference type="FunFam" id="2.102.10.10:FF:000001">
    <property type="entry name" value="Cytochrome b-c1 complex subunit Rieske, mitochondrial"/>
    <property type="match status" value="1"/>
</dbReference>
<dbReference type="Gene3D" id="2.10.210.10">
    <property type="entry name" value="Cytochrome Bc1 Complex, Chain I"/>
    <property type="match status" value="1"/>
</dbReference>
<dbReference type="Gene3D" id="2.102.10.10">
    <property type="entry name" value="Rieske [2Fe-2S] iron-sulphur domain"/>
    <property type="match status" value="1"/>
</dbReference>
<dbReference type="Gene3D" id="1.20.5.270">
    <property type="entry name" value="Ubiquinol cytochrome reductase, transmembrane domain"/>
    <property type="match status" value="1"/>
</dbReference>
<dbReference type="InterPro" id="IPR037008">
    <property type="entry name" value="bc1_Rieske_TM_sf"/>
</dbReference>
<dbReference type="InterPro" id="IPR011070">
    <property type="entry name" value="Globular_prot_asu/bsu"/>
</dbReference>
<dbReference type="InterPro" id="IPR017941">
    <property type="entry name" value="Rieske_2Fe-2S"/>
</dbReference>
<dbReference type="InterPro" id="IPR036922">
    <property type="entry name" value="Rieske_2Fe-2S_sf"/>
</dbReference>
<dbReference type="InterPro" id="IPR014349">
    <property type="entry name" value="Rieske_Fe-S_prot"/>
</dbReference>
<dbReference type="InterPro" id="IPR005805">
    <property type="entry name" value="Rieske_Fe-S_prot_C"/>
</dbReference>
<dbReference type="InterPro" id="IPR004192">
    <property type="entry name" value="Rieske_TM"/>
</dbReference>
<dbReference type="InterPro" id="IPR006317">
    <property type="entry name" value="Ubiquinol_cyt_c_Rdtase_Fe-S-su"/>
</dbReference>
<dbReference type="InterPro" id="IPR015248">
    <property type="entry name" value="UQCRFS1_N"/>
</dbReference>
<dbReference type="NCBIfam" id="TIGR01416">
    <property type="entry name" value="Rieske_proteo"/>
    <property type="match status" value="1"/>
</dbReference>
<dbReference type="PANTHER" id="PTHR10134">
    <property type="entry name" value="CYTOCHROME B-C1 COMPLEX SUBUNIT RIESKE, MITOCHONDRIAL"/>
    <property type="match status" value="1"/>
</dbReference>
<dbReference type="Pfam" id="PF00355">
    <property type="entry name" value="Rieske"/>
    <property type="match status" value="1"/>
</dbReference>
<dbReference type="Pfam" id="PF09165">
    <property type="entry name" value="Ubiq-Cytc-red_N"/>
    <property type="match status" value="1"/>
</dbReference>
<dbReference type="Pfam" id="PF02921">
    <property type="entry name" value="UCR_TM"/>
    <property type="match status" value="1"/>
</dbReference>
<dbReference type="PRINTS" id="PR00162">
    <property type="entry name" value="RIESKE"/>
</dbReference>
<dbReference type="SUPFAM" id="SSF50022">
    <property type="entry name" value="ISP domain"/>
    <property type="match status" value="1"/>
</dbReference>
<dbReference type="SUPFAM" id="SSF81502">
    <property type="entry name" value="ISP transmembrane anchor"/>
    <property type="match status" value="1"/>
</dbReference>
<dbReference type="SUPFAM" id="SSF56568">
    <property type="entry name" value="Non-globular alpha+beta subunits of globular proteins"/>
    <property type="match status" value="1"/>
</dbReference>
<dbReference type="PROSITE" id="PS51296">
    <property type="entry name" value="RIESKE"/>
    <property type="match status" value="1"/>
</dbReference>
<name>UCRI_THEGE</name>
<protein>
    <recommendedName>
        <fullName>Cytochrome b-c1 complex subunit Rieske, mitochondrial</fullName>
        <ecNumber>7.1.1.8</ecNumber>
    </recommendedName>
    <alternativeName>
        <fullName>Complex III subunit 5</fullName>
    </alternativeName>
    <alternativeName>
        <fullName>Cytochrome b-c1 complex subunit 5</fullName>
    </alternativeName>
    <alternativeName>
        <fullName>Rieske iron-sulfur protein</fullName>
        <shortName>RISP</shortName>
    </alternativeName>
    <alternativeName>
        <fullName evidence="7">Rieske protein UQCRFS1</fullName>
    </alternativeName>
    <alternativeName>
        <fullName>Ubiquinol-cytochrome c reductase iron-sulfur subunit</fullName>
    </alternativeName>
    <component>
        <recommendedName>
            <fullName evidence="2">Cytochrome b-c1 complex subunit 9</fullName>
            <shortName evidence="2">Su9</shortName>
            <shortName evidence="2">Subunit 9</shortName>
        </recommendedName>
        <alternativeName>
            <fullName evidence="2">8 kDa subunit 9</fullName>
        </alternativeName>
        <alternativeName>
            <fullName>Complex III subunit IX</fullName>
        </alternativeName>
        <alternativeName>
            <fullName>Cytochrome b-c1 complex subunit 11</fullName>
        </alternativeName>
        <alternativeName>
            <fullName>UQCRFS1 mitochondrial targeting sequence</fullName>
            <shortName>UQCRFS1 MTS</shortName>
        </alternativeName>
        <alternativeName>
            <fullName evidence="2">Ubiquinol-cytochrome c reductase 8 kDa protein</fullName>
        </alternativeName>
    </component>
</protein>
<sequence length="274" mass="29724">MLSVAARSGPFAPVLSATSRGVAGALRPLVQATVPATPKPPVLDLKRPFLSRESLSGQAVRRPLVASVGLNVPASVCYSHTDVKVPDFYDYRRLEVLDSTKSSRESSEARKGFSYLVTAVTTVGVAYAAKNAVTQFISSMSASADVLAMAKIEINLSDIPEGKNMAFKWRGKPLFVRHRTQKEIEQEAAVELSQLRDPQHDLDRVKKPEWVILIGICTHLGCVPIANAGDFGGYYCPCHGSHYDVSGRIRLGPAPLNLEVPPYEFTSDDMVVVG</sequence>